<sequence length="171" mass="19866">MDYFTLFGLPASYTLSLEQLAVRYQDLQRQYHPDKFASAPAAEQLAAVQHSATINQAWQTLRHPLTRAEYLLSLHGFDLASEQHTVRDTAFLMEQLELREELDEIGQAKDEARLEAFIKRVKALFDTRHQLMVEQLQNETWDAAADTVRKLRFLDKLRSSAEELEEKLLDF</sequence>
<organism>
    <name type="scientific">Klebsiella pneumoniae (strain 342)</name>
    <dbReference type="NCBI Taxonomy" id="507522"/>
    <lineage>
        <taxon>Bacteria</taxon>
        <taxon>Pseudomonadati</taxon>
        <taxon>Pseudomonadota</taxon>
        <taxon>Gammaproteobacteria</taxon>
        <taxon>Enterobacterales</taxon>
        <taxon>Enterobacteriaceae</taxon>
        <taxon>Klebsiella/Raoultella group</taxon>
        <taxon>Klebsiella</taxon>
        <taxon>Klebsiella pneumoniae complex</taxon>
    </lineage>
</organism>
<comment type="function">
    <text evidence="1">Co-chaperone involved in the maturation of iron-sulfur cluster-containing proteins. Seems to help targeting proteins to be folded toward HscA.</text>
</comment>
<comment type="subunit">
    <text evidence="1">Interacts with HscA and stimulates its ATPase activity. Interacts with IscU.</text>
</comment>
<comment type="similarity">
    <text evidence="1">Belongs to the HscB family.</text>
</comment>
<accession>B5XNK0</accession>
<feature type="chain" id="PRO_1000131741" description="Co-chaperone protein HscB">
    <location>
        <begin position="1"/>
        <end position="171"/>
    </location>
</feature>
<feature type="domain" description="J" evidence="1">
    <location>
        <begin position="2"/>
        <end position="74"/>
    </location>
</feature>
<evidence type="ECO:0000255" key="1">
    <source>
        <dbReference type="HAMAP-Rule" id="MF_00682"/>
    </source>
</evidence>
<gene>
    <name evidence="1" type="primary">hscB</name>
    <name type="ordered locus">KPK_1260</name>
</gene>
<proteinExistence type="inferred from homology"/>
<protein>
    <recommendedName>
        <fullName evidence="1">Co-chaperone protein HscB</fullName>
    </recommendedName>
    <alternativeName>
        <fullName evidence="1">Hsc20</fullName>
    </alternativeName>
</protein>
<dbReference type="EMBL" id="CP000964">
    <property type="protein sequence ID" value="ACI07262.1"/>
    <property type="molecule type" value="Genomic_DNA"/>
</dbReference>
<dbReference type="SMR" id="B5XNK0"/>
<dbReference type="KEGG" id="kpe:KPK_1260"/>
<dbReference type="HOGENOM" id="CLU_068529_2_0_6"/>
<dbReference type="Proteomes" id="UP000001734">
    <property type="component" value="Chromosome"/>
</dbReference>
<dbReference type="GO" id="GO:1990230">
    <property type="term" value="C:iron-sulfur cluster transfer complex"/>
    <property type="evidence" value="ECO:0007669"/>
    <property type="project" value="TreeGrafter"/>
</dbReference>
<dbReference type="GO" id="GO:0001671">
    <property type="term" value="F:ATPase activator activity"/>
    <property type="evidence" value="ECO:0007669"/>
    <property type="project" value="InterPro"/>
</dbReference>
<dbReference type="GO" id="GO:0051087">
    <property type="term" value="F:protein-folding chaperone binding"/>
    <property type="evidence" value="ECO:0007669"/>
    <property type="project" value="InterPro"/>
</dbReference>
<dbReference type="GO" id="GO:0044571">
    <property type="term" value="P:[2Fe-2S] cluster assembly"/>
    <property type="evidence" value="ECO:0007669"/>
    <property type="project" value="InterPro"/>
</dbReference>
<dbReference type="GO" id="GO:0051259">
    <property type="term" value="P:protein complex oligomerization"/>
    <property type="evidence" value="ECO:0007669"/>
    <property type="project" value="InterPro"/>
</dbReference>
<dbReference type="GO" id="GO:0006457">
    <property type="term" value="P:protein folding"/>
    <property type="evidence" value="ECO:0007669"/>
    <property type="project" value="UniProtKB-UniRule"/>
</dbReference>
<dbReference type="CDD" id="cd06257">
    <property type="entry name" value="DnaJ"/>
    <property type="match status" value="1"/>
</dbReference>
<dbReference type="FunFam" id="1.10.287.110:FF:000008">
    <property type="entry name" value="Co-chaperone protein HscB"/>
    <property type="match status" value="1"/>
</dbReference>
<dbReference type="FunFam" id="1.20.1280.20:FF:000001">
    <property type="entry name" value="Co-chaperone protein HscB"/>
    <property type="match status" value="1"/>
</dbReference>
<dbReference type="Gene3D" id="1.10.287.110">
    <property type="entry name" value="DnaJ domain"/>
    <property type="match status" value="1"/>
</dbReference>
<dbReference type="Gene3D" id="1.20.1280.20">
    <property type="entry name" value="HscB, C-terminal domain"/>
    <property type="match status" value="1"/>
</dbReference>
<dbReference type="HAMAP" id="MF_00682">
    <property type="entry name" value="HscB"/>
    <property type="match status" value="1"/>
</dbReference>
<dbReference type="InterPro" id="IPR001623">
    <property type="entry name" value="DnaJ_domain"/>
</dbReference>
<dbReference type="InterPro" id="IPR004640">
    <property type="entry name" value="HscB"/>
</dbReference>
<dbReference type="InterPro" id="IPR036386">
    <property type="entry name" value="HscB_C_sf"/>
</dbReference>
<dbReference type="InterPro" id="IPR009073">
    <property type="entry name" value="HscB_oligo_C"/>
</dbReference>
<dbReference type="InterPro" id="IPR036869">
    <property type="entry name" value="J_dom_sf"/>
</dbReference>
<dbReference type="NCBIfam" id="TIGR00714">
    <property type="entry name" value="hscB"/>
    <property type="match status" value="1"/>
</dbReference>
<dbReference type="NCBIfam" id="NF003449">
    <property type="entry name" value="PRK05014.1"/>
    <property type="match status" value="1"/>
</dbReference>
<dbReference type="PANTHER" id="PTHR14021">
    <property type="entry name" value="IRON-SULFUR CLUSTER CO-CHAPERONE PROTEIN HSCB"/>
    <property type="match status" value="1"/>
</dbReference>
<dbReference type="PANTHER" id="PTHR14021:SF15">
    <property type="entry name" value="IRON-SULFUR CLUSTER CO-CHAPERONE PROTEIN HSCB"/>
    <property type="match status" value="1"/>
</dbReference>
<dbReference type="Pfam" id="PF00226">
    <property type="entry name" value="DnaJ"/>
    <property type="match status" value="1"/>
</dbReference>
<dbReference type="Pfam" id="PF07743">
    <property type="entry name" value="HSCB_C"/>
    <property type="match status" value="1"/>
</dbReference>
<dbReference type="SMART" id="SM00271">
    <property type="entry name" value="DnaJ"/>
    <property type="match status" value="1"/>
</dbReference>
<dbReference type="SUPFAM" id="SSF46565">
    <property type="entry name" value="Chaperone J-domain"/>
    <property type="match status" value="1"/>
</dbReference>
<dbReference type="SUPFAM" id="SSF47144">
    <property type="entry name" value="HSC20 (HSCB), C-terminal oligomerisation domain"/>
    <property type="match status" value="1"/>
</dbReference>
<dbReference type="PROSITE" id="PS50076">
    <property type="entry name" value="DNAJ_2"/>
    <property type="match status" value="1"/>
</dbReference>
<name>HSCB_KLEP3</name>
<reference key="1">
    <citation type="journal article" date="2008" name="PLoS Genet.">
        <title>Complete genome sequence of the N2-fixing broad host range endophyte Klebsiella pneumoniae 342 and virulence predictions verified in mice.</title>
        <authorList>
            <person name="Fouts D.E."/>
            <person name="Tyler H.L."/>
            <person name="DeBoy R.T."/>
            <person name="Daugherty S."/>
            <person name="Ren Q."/>
            <person name="Badger J.H."/>
            <person name="Durkin A.S."/>
            <person name="Huot H."/>
            <person name="Shrivastava S."/>
            <person name="Kothari S."/>
            <person name="Dodson R.J."/>
            <person name="Mohamoud Y."/>
            <person name="Khouri H."/>
            <person name="Roesch L.F.W."/>
            <person name="Krogfelt K.A."/>
            <person name="Struve C."/>
            <person name="Triplett E.W."/>
            <person name="Methe B.A."/>
        </authorList>
    </citation>
    <scope>NUCLEOTIDE SEQUENCE [LARGE SCALE GENOMIC DNA]</scope>
    <source>
        <strain>342</strain>
    </source>
</reference>
<keyword id="KW-0143">Chaperone</keyword>